<gene>
    <name type="ordered locus">Mbar_A1422</name>
</gene>
<accession>Q46CL1</accession>
<feature type="chain" id="PRO_1000003318" description="MEMO1 family protein Mbar_A1422">
    <location>
        <begin position="1"/>
        <end position="265"/>
    </location>
</feature>
<comment type="similarity">
    <text evidence="1">Belongs to the MEMO1 family.</text>
</comment>
<reference key="1">
    <citation type="journal article" date="2006" name="J. Bacteriol.">
        <title>The Methanosarcina barkeri genome: comparative analysis with Methanosarcina acetivorans and Methanosarcina mazei reveals extensive rearrangement within methanosarcinal genomes.</title>
        <authorList>
            <person name="Maeder D.L."/>
            <person name="Anderson I."/>
            <person name="Brettin T.S."/>
            <person name="Bruce D.C."/>
            <person name="Gilna P."/>
            <person name="Han C.S."/>
            <person name="Lapidus A."/>
            <person name="Metcalf W.W."/>
            <person name="Saunders E."/>
            <person name="Tapia R."/>
            <person name="Sowers K.R."/>
        </authorList>
    </citation>
    <scope>NUCLEOTIDE SEQUENCE [LARGE SCALE GENOMIC DNA]</scope>
    <source>
        <strain>Fusaro / DSM 804</strain>
    </source>
</reference>
<evidence type="ECO:0000255" key="1">
    <source>
        <dbReference type="HAMAP-Rule" id="MF_00055"/>
    </source>
</evidence>
<dbReference type="EMBL" id="CP000099">
    <property type="protein sequence ID" value="AAZ70381.1"/>
    <property type="molecule type" value="Genomic_DNA"/>
</dbReference>
<dbReference type="SMR" id="Q46CL1"/>
<dbReference type="STRING" id="269797.Mbar_A1422"/>
<dbReference type="PaxDb" id="269797-Mbar_A1422"/>
<dbReference type="KEGG" id="mba:Mbar_A1422"/>
<dbReference type="eggNOG" id="arCOG01728">
    <property type="taxonomic scope" value="Archaea"/>
</dbReference>
<dbReference type="HOGENOM" id="CLU_038085_2_0_2"/>
<dbReference type="OrthoDB" id="372162at2157"/>
<dbReference type="CDD" id="cd07361">
    <property type="entry name" value="MEMO_like"/>
    <property type="match status" value="1"/>
</dbReference>
<dbReference type="Gene3D" id="3.40.830.10">
    <property type="entry name" value="LigB-like"/>
    <property type="match status" value="1"/>
</dbReference>
<dbReference type="HAMAP" id="MF_00055">
    <property type="entry name" value="MEMO1"/>
    <property type="match status" value="1"/>
</dbReference>
<dbReference type="InterPro" id="IPR002737">
    <property type="entry name" value="MEMO1_fam"/>
</dbReference>
<dbReference type="NCBIfam" id="TIGR04336">
    <property type="entry name" value="AmmeMemoSam_B"/>
    <property type="match status" value="1"/>
</dbReference>
<dbReference type="NCBIfam" id="NF001987">
    <property type="entry name" value="PRK00782.1"/>
    <property type="match status" value="1"/>
</dbReference>
<dbReference type="PANTHER" id="PTHR11060">
    <property type="entry name" value="PROTEIN MEMO1"/>
    <property type="match status" value="1"/>
</dbReference>
<dbReference type="PANTHER" id="PTHR11060:SF0">
    <property type="entry name" value="PROTEIN MEMO1"/>
    <property type="match status" value="1"/>
</dbReference>
<dbReference type="Pfam" id="PF01875">
    <property type="entry name" value="Memo"/>
    <property type="match status" value="1"/>
</dbReference>
<dbReference type="SUPFAM" id="SSF53213">
    <property type="entry name" value="LigB-like"/>
    <property type="match status" value="1"/>
</dbReference>
<name>Y1422_METBF</name>
<protein>
    <recommendedName>
        <fullName evidence="1">MEMO1 family protein Mbar_A1422</fullName>
    </recommendedName>
</protein>
<proteinExistence type="inferred from homology"/>
<organism>
    <name type="scientific">Methanosarcina barkeri (strain Fusaro / DSM 804)</name>
    <dbReference type="NCBI Taxonomy" id="269797"/>
    <lineage>
        <taxon>Archaea</taxon>
        <taxon>Methanobacteriati</taxon>
        <taxon>Methanobacteriota</taxon>
        <taxon>Stenosarchaea group</taxon>
        <taxon>Methanomicrobia</taxon>
        <taxon>Methanosarcinales</taxon>
        <taxon>Methanosarcinaceae</taxon>
        <taxon>Methanosarcina</taxon>
    </lineage>
</organism>
<sequence>MRQPAVAGQFYPLRPDNLEKELKQCFEGLEIRERNILGAVCPHAGYVYSGRVAAHVYAVLPKADTYVLFGPNHTGYGSPVSVSTDTWKTPLGIIEVDRELAEGLTGSIVDVDEIGHRYEHSIEVQLPFLQYRFDQDFRILPICLGMQDEETVIEVGTLIANLVSKSGKKVAFIASSDFTHYQPANLARETDNEIIEAILNLDVPGIYERLYRRNASVCGYGPISAMLTASKKLGATRAELLNYSNSGEVSGDMNAVVGYAAIIVE</sequence>